<name>CG121_CANGA</name>
<evidence type="ECO:0000250" key="1"/>
<evidence type="ECO:0000305" key="2"/>
<sequence length="175" mass="19915">MNFKIPQFPDFEISITAFENVTNSESIRSKVATLPYAFLDARMIYSQEQLYAALYRVLVEQNYNKLRTKTIHSEIMLCLSPTSNIGDAFKKFGIKEDSSTVICLHIKDRSDEPELPSLSSIVEGQEISLSKEFINQHRDIGMVGHVYKINGEMIENSTEDQVSSMIVNMIQLRGL</sequence>
<organism>
    <name type="scientific">Candida glabrata (strain ATCC 2001 / BCRC 20586 / JCM 3761 / NBRC 0622 / NRRL Y-65 / CBS 138)</name>
    <name type="common">Yeast</name>
    <name type="synonym">Nakaseomyces glabratus</name>
    <dbReference type="NCBI Taxonomy" id="284593"/>
    <lineage>
        <taxon>Eukaryota</taxon>
        <taxon>Fungi</taxon>
        <taxon>Dikarya</taxon>
        <taxon>Ascomycota</taxon>
        <taxon>Saccharomycotina</taxon>
        <taxon>Saccharomycetes</taxon>
        <taxon>Saccharomycetales</taxon>
        <taxon>Saccharomycetaceae</taxon>
        <taxon>Nakaseomyces</taxon>
    </lineage>
</organism>
<comment type="function">
    <text evidence="1">Component of the EKC/KEOPS complex that is required for the formation of a threonylcarbamoyl group on adenosine at position 37 (t(6)A37) in tRNAs that read codons beginning with adenine. The complex is probably involved in the transfer of the threonylcarbamoyl moiety of threonylcarbamoyl-AMP (TC-AMP) to the N6 group of A37. CGI121 acts as an allosteric effector that regulates the t(6)A activity of the complex. The EKC/KEOPS complex also promotes both telomere uncapping and telomere elongation. The complex is required for efficient recruitment of transcriptional coactivators. CGI121 is not required for tRNA modification (By similarity).</text>
</comment>
<comment type="subunit">
    <text evidence="1">Component of the EKC/KEOPS complex composed of at least BUD32, CGI121, GON7, KAE1 and PCC1; the whole complex dimerizes.</text>
</comment>
<comment type="subcellular location">
    <subcellularLocation>
        <location evidence="1">Nucleus</location>
    </subcellularLocation>
    <subcellularLocation>
        <location evidence="1">Chromosome</location>
        <location evidence="1">Telomere</location>
    </subcellularLocation>
</comment>
<comment type="similarity">
    <text evidence="2">Belongs to the CGI121/TPRKB family.</text>
</comment>
<dbReference type="EMBL" id="CR380951">
    <property type="protein sequence ID" value="CAG58791.1"/>
    <property type="molecule type" value="Genomic_DNA"/>
</dbReference>
<dbReference type="RefSeq" id="XP_445872.1">
    <property type="nucleotide sequence ID" value="XM_445872.1"/>
</dbReference>
<dbReference type="SMR" id="Q6FV72"/>
<dbReference type="FunCoup" id="Q6FV72">
    <property type="interactions" value="524"/>
</dbReference>
<dbReference type="STRING" id="284593.Q6FV72"/>
<dbReference type="EnsemblFungi" id="CAGL0E04246g-T">
    <property type="protein sequence ID" value="CAGL0E04246g-T-p1"/>
    <property type="gene ID" value="CAGL0E04246g"/>
</dbReference>
<dbReference type="KEGG" id="cgr:2887553"/>
<dbReference type="CGD" id="CAL0129028">
    <property type="gene designation" value="CAGL0E04246g"/>
</dbReference>
<dbReference type="VEuPathDB" id="FungiDB:CAGL0E04246g"/>
<dbReference type="eggNOG" id="KOG4066">
    <property type="taxonomic scope" value="Eukaryota"/>
</dbReference>
<dbReference type="HOGENOM" id="CLU_065847_1_1_1"/>
<dbReference type="InParanoid" id="Q6FV72"/>
<dbReference type="OMA" id="IVCRMST"/>
<dbReference type="Proteomes" id="UP000002428">
    <property type="component" value="Chromosome E"/>
</dbReference>
<dbReference type="GO" id="GO:0000781">
    <property type="term" value="C:chromosome, telomeric region"/>
    <property type="evidence" value="ECO:0007669"/>
    <property type="project" value="UniProtKB-SubCell"/>
</dbReference>
<dbReference type="GO" id="GO:0005829">
    <property type="term" value="C:cytosol"/>
    <property type="evidence" value="ECO:0007669"/>
    <property type="project" value="TreeGrafter"/>
</dbReference>
<dbReference type="GO" id="GO:0000408">
    <property type="term" value="C:EKC/KEOPS complex"/>
    <property type="evidence" value="ECO:0007669"/>
    <property type="project" value="EnsemblFungi"/>
</dbReference>
<dbReference type="GO" id="GO:0005634">
    <property type="term" value="C:nucleus"/>
    <property type="evidence" value="ECO:0007669"/>
    <property type="project" value="UniProtKB-SubCell"/>
</dbReference>
<dbReference type="GO" id="GO:0000049">
    <property type="term" value="F:tRNA binding"/>
    <property type="evidence" value="ECO:0007669"/>
    <property type="project" value="EnsemblFungi"/>
</dbReference>
<dbReference type="GO" id="GO:0045944">
    <property type="term" value="P:positive regulation of transcription by RNA polymerase II"/>
    <property type="evidence" value="ECO:0007669"/>
    <property type="project" value="EnsemblFungi"/>
</dbReference>
<dbReference type="GO" id="GO:0000722">
    <property type="term" value="P:telomere maintenance via recombination"/>
    <property type="evidence" value="ECO:0007669"/>
    <property type="project" value="EnsemblFungi"/>
</dbReference>
<dbReference type="GO" id="GO:0002949">
    <property type="term" value="P:tRNA threonylcarbamoyladenosine modification"/>
    <property type="evidence" value="ECO:0007669"/>
    <property type="project" value="TreeGrafter"/>
</dbReference>
<dbReference type="Gene3D" id="3.30.2380.10">
    <property type="entry name" value="CGI121/TPRKB"/>
    <property type="match status" value="1"/>
</dbReference>
<dbReference type="InterPro" id="IPR013926">
    <property type="entry name" value="CGI121/TPRKB"/>
</dbReference>
<dbReference type="InterPro" id="IPR036504">
    <property type="entry name" value="CGI121/TPRKB_sf"/>
</dbReference>
<dbReference type="PANTHER" id="PTHR15840">
    <property type="entry name" value="CGI-121 FAMILY MEMBER"/>
    <property type="match status" value="1"/>
</dbReference>
<dbReference type="PANTHER" id="PTHR15840:SF10">
    <property type="entry name" value="EKC_KEOPS COMPLEX SUBUNIT TPRKB"/>
    <property type="match status" value="1"/>
</dbReference>
<dbReference type="Pfam" id="PF08617">
    <property type="entry name" value="CGI-121"/>
    <property type="match status" value="1"/>
</dbReference>
<dbReference type="SUPFAM" id="SSF143870">
    <property type="entry name" value="PF0523-like"/>
    <property type="match status" value="1"/>
</dbReference>
<feature type="chain" id="PRO_0000279209" description="EKC/KEOPS complex subunit CGI121">
    <location>
        <begin position="1"/>
        <end position="175"/>
    </location>
</feature>
<proteinExistence type="inferred from homology"/>
<protein>
    <recommendedName>
        <fullName>EKC/KEOPS complex subunit CGI121</fullName>
    </recommendedName>
</protein>
<accession>Q6FV72</accession>
<reference key="1">
    <citation type="journal article" date="2004" name="Nature">
        <title>Genome evolution in yeasts.</title>
        <authorList>
            <person name="Dujon B."/>
            <person name="Sherman D."/>
            <person name="Fischer G."/>
            <person name="Durrens P."/>
            <person name="Casaregola S."/>
            <person name="Lafontaine I."/>
            <person name="de Montigny J."/>
            <person name="Marck C."/>
            <person name="Neuveglise C."/>
            <person name="Talla E."/>
            <person name="Goffard N."/>
            <person name="Frangeul L."/>
            <person name="Aigle M."/>
            <person name="Anthouard V."/>
            <person name="Babour A."/>
            <person name="Barbe V."/>
            <person name="Barnay S."/>
            <person name="Blanchin S."/>
            <person name="Beckerich J.-M."/>
            <person name="Beyne E."/>
            <person name="Bleykasten C."/>
            <person name="Boisrame A."/>
            <person name="Boyer J."/>
            <person name="Cattolico L."/>
            <person name="Confanioleri F."/>
            <person name="de Daruvar A."/>
            <person name="Despons L."/>
            <person name="Fabre E."/>
            <person name="Fairhead C."/>
            <person name="Ferry-Dumazet H."/>
            <person name="Groppi A."/>
            <person name="Hantraye F."/>
            <person name="Hennequin C."/>
            <person name="Jauniaux N."/>
            <person name="Joyet P."/>
            <person name="Kachouri R."/>
            <person name="Kerrest A."/>
            <person name="Koszul R."/>
            <person name="Lemaire M."/>
            <person name="Lesur I."/>
            <person name="Ma L."/>
            <person name="Muller H."/>
            <person name="Nicaud J.-M."/>
            <person name="Nikolski M."/>
            <person name="Oztas S."/>
            <person name="Ozier-Kalogeropoulos O."/>
            <person name="Pellenz S."/>
            <person name="Potier S."/>
            <person name="Richard G.-F."/>
            <person name="Straub M.-L."/>
            <person name="Suleau A."/>
            <person name="Swennen D."/>
            <person name="Tekaia F."/>
            <person name="Wesolowski-Louvel M."/>
            <person name="Westhof E."/>
            <person name="Wirth B."/>
            <person name="Zeniou-Meyer M."/>
            <person name="Zivanovic Y."/>
            <person name="Bolotin-Fukuhara M."/>
            <person name="Thierry A."/>
            <person name="Bouchier C."/>
            <person name="Caudron B."/>
            <person name="Scarpelli C."/>
            <person name="Gaillardin C."/>
            <person name="Weissenbach J."/>
            <person name="Wincker P."/>
            <person name="Souciet J.-L."/>
        </authorList>
    </citation>
    <scope>NUCLEOTIDE SEQUENCE [LARGE SCALE GENOMIC DNA]</scope>
    <source>
        <strain>ATCC 2001 / BCRC 20586 / JCM 3761 / NBRC 0622 / NRRL Y-65 / CBS 138</strain>
    </source>
</reference>
<gene>
    <name type="primary">CGI121</name>
    <name type="ordered locus">CAGL0E04246g</name>
</gene>
<keyword id="KW-0010">Activator</keyword>
<keyword id="KW-0158">Chromosome</keyword>
<keyword id="KW-0539">Nucleus</keyword>
<keyword id="KW-1185">Reference proteome</keyword>
<keyword id="KW-0779">Telomere</keyword>
<keyword id="KW-0804">Transcription</keyword>
<keyword id="KW-0805">Transcription regulation</keyword>
<keyword id="KW-0819">tRNA processing</keyword>